<proteinExistence type="inferred from homology"/>
<gene>
    <name evidence="1" type="primary">pyrB</name>
    <name type="ordered locus">Dred_1681</name>
</gene>
<reference key="1">
    <citation type="submission" date="2007-03" db="EMBL/GenBank/DDBJ databases">
        <title>Complete sequence of Desulfotomaculum reducens MI-1.</title>
        <authorList>
            <consortium name="US DOE Joint Genome Institute"/>
            <person name="Copeland A."/>
            <person name="Lucas S."/>
            <person name="Lapidus A."/>
            <person name="Barry K."/>
            <person name="Detter J.C."/>
            <person name="Glavina del Rio T."/>
            <person name="Hammon N."/>
            <person name="Israni S."/>
            <person name="Dalin E."/>
            <person name="Tice H."/>
            <person name="Pitluck S."/>
            <person name="Sims D."/>
            <person name="Brettin T."/>
            <person name="Bruce D."/>
            <person name="Han C."/>
            <person name="Tapia R."/>
            <person name="Schmutz J."/>
            <person name="Larimer F."/>
            <person name="Land M."/>
            <person name="Hauser L."/>
            <person name="Kyrpides N."/>
            <person name="Kim E."/>
            <person name="Tebo B.M."/>
            <person name="Richardson P."/>
        </authorList>
    </citation>
    <scope>NUCLEOTIDE SEQUENCE [LARGE SCALE GENOMIC DNA]</scope>
    <source>
        <strain>ATCC BAA-1160 / DSM 100696 / MI-1</strain>
    </source>
</reference>
<name>PYRB_DESRM</name>
<comment type="function">
    <text evidence="1">Catalyzes the condensation of carbamoyl phosphate and aspartate to form carbamoyl aspartate and inorganic phosphate, the committed step in the de novo pyrimidine nucleotide biosynthesis pathway.</text>
</comment>
<comment type="catalytic activity">
    <reaction evidence="1">
        <text>carbamoyl phosphate + L-aspartate = N-carbamoyl-L-aspartate + phosphate + H(+)</text>
        <dbReference type="Rhea" id="RHEA:20013"/>
        <dbReference type="ChEBI" id="CHEBI:15378"/>
        <dbReference type="ChEBI" id="CHEBI:29991"/>
        <dbReference type="ChEBI" id="CHEBI:32814"/>
        <dbReference type="ChEBI" id="CHEBI:43474"/>
        <dbReference type="ChEBI" id="CHEBI:58228"/>
        <dbReference type="EC" id="2.1.3.2"/>
    </reaction>
</comment>
<comment type="pathway">
    <text evidence="1">Pyrimidine metabolism; UMP biosynthesis via de novo pathway; (S)-dihydroorotate from bicarbonate: step 2/3.</text>
</comment>
<comment type="subunit">
    <text evidence="1">Heterododecamer (2C3:3R2) of six catalytic PyrB chains organized as two trimers (C3), and six regulatory PyrI chains organized as three dimers (R2).</text>
</comment>
<comment type="similarity">
    <text evidence="1">Belongs to the aspartate/ornithine carbamoyltransferase superfamily. ATCase family.</text>
</comment>
<dbReference type="EC" id="2.1.3.2" evidence="1"/>
<dbReference type="EMBL" id="CP000612">
    <property type="protein sequence ID" value="ABO50208.1"/>
    <property type="molecule type" value="Genomic_DNA"/>
</dbReference>
<dbReference type="RefSeq" id="WP_011878023.1">
    <property type="nucleotide sequence ID" value="NC_009253.1"/>
</dbReference>
<dbReference type="SMR" id="A4J555"/>
<dbReference type="STRING" id="349161.Dred_1681"/>
<dbReference type="KEGG" id="drm:Dred_1681"/>
<dbReference type="eggNOG" id="COG0540">
    <property type="taxonomic scope" value="Bacteria"/>
</dbReference>
<dbReference type="HOGENOM" id="CLU_043846_2_0_9"/>
<dbReference type="OrthoDB" id="9802587at2"/>
<dbReference type="UniPathway" id="UPA00070">
    <property type="reaction ID" value="UER00116"/>
</dbReference>
<dbReference type="Proteomes" id="UP000001556">
    <property type="component" value="Chromosome"/>
</dbReference>
<dbReference type="GO" id="GO:0005829">
    <property type="term" value="C:cytosol"/>
    <property type="evidence" value="ECO:0007669"/>
    <property type="project" value="TreeGrafter"/>
</dbReference>
<dbReference type="GO" id="GO:0016597">
    <property type="term" value="F:amino acid binding"/>
    <property type="evidence" value="ECO:0007669"/>
    <property type="project" value="InterPro"/>
</dbReference>
<dbReference type="GO" id="GO:0004070">
    <property type="term" value="F:aspartate carbamoyltransferase activity"/>
    <property type="evidence" value="ECO:0007669"/>
    <property type="project" value="UniProtKB-UniRule"/>
</dbReference>
<dbReference type="GO" id="GO:0006207">
    <property type="term" value="P:'de novo' pyrimidine nucleobase biosynthetic process"/>
    <property type="evidence" value="ECO:0007669"/>
    <property type="project" value="InterPro"/>
</dbReference>
<dbReference type="GO" id="GO:0044205">
    <property type="term" value="P:'de novo' UMP biosynthetic process"/>
    <property type="evidence" value="ECO:0007669"/>
    <property type="project" value="UniProtKB-UniRule"/>
</dbReference>
<dbReference type="GO" id="GO:0006520">
    <property type="term" value="P:amino acid metabolic process"/>
    <property type="evidence" value="ECO:0007669"/>
    <property type="project" value="InterPro"/>
</dbReference>
<dbReference type="FunFam" id="3.40.50.1370:FF:000007">
    <property type="entry name" value="Aspartate carbamoyltransferase"/>
    <property type="match status" value="1"/>
</dbReference>
<dbReference type="Gene3D" id="3.40.50.1370">
    <property type="entry name" value="Aspartate/ornithine carbamoyltransferase"/>
    <property type="match status" value="2"/>
</dbReference>
<dbReference type="HAMAP" id="MF_00001">
    <property type="entry name" value="Asp_carb_tr"/>
    <property type="match status" value="1"/>
</dbReference>
<dbReference type="InterPro" id="IPR006132">
    <property type="entry name" value="Asp/Orn_carbamoyltranf_P-bd"/>
</dbReference>
<dbReference type="InterPro" id="IPR006130">
    <property type="entry name" value="Asp/Orn_carbamoylTrfase"/>
</dbReference>
<dbReference type="InterPro" id="IPR036901">
    <property type="entry name" value="Asp/Orn_carbamoylTrfase_sf"/>
</dbReference>
<dbReference type="InterPro" id="IPR002082">
    <property type="entry name" value="Asp_carbamoyltransf"/>
</dbReference>
<dbReference type="InterPro" id="IPR006131">
    <property type="entry name" value="Asp_carbamoyltransf_Asp/Orn-bd"/>
</dbReference>
<dbReference type="NCBIfam" id="TIGR00670">
    <property type="entry name" value="asp_carb_tr"/>
    <property type="match status" value="1"/>
</dbReference>
<dbReference type="NCBIfam" id="NF002032">
    <property type="entry name" value="PRK00856.1"/>
    <property type="match status" value="1"/>
</dbReference>
<dbReference type="PANTHER" id="PTHR45753:SF6">
    <property type="entry name" value="ASPARTATE CARBAMOYLTRANSFERASE"/>
    <property type="match status" value="1"/>
</dbReference>
<dbReference type="PANTHER" id="PTHR45753">
    <property type="entry name" value="ORNITHINE CARBAMOYLTRANSFERASE, MITOCHONDRIAL"/>
    <property type="match status" value="1"/>
</dbReference>
<dbReference type="Pfam" id="PF00185">
    <property type="entry name" value="OTCace"/>
    <property type="match status" value="1"/>
</dbReference>
<dbReference type="Pfam" id="PF02729">
    <property type="entry name" value="OTCace_N"/>
    <property type="match status" value="1"/>
</dbReference>
<dbReference type="PRINTS" id="PR00100">
    <property type="entry name" value="AOTCASE"/>
</dbReference>
<dbReference type="PRINTS" id="PR00101">
    <property type="entry name" value="ATCASE"/>
</dbReference>
<dbReference type="SUPFAM" id="SSF53671">
    <property type="entry name" value="Aspartate/ornithine carbamoyltransferase"/>
    <property type="match status" value="1"/>
</dbReference>
<dbReference type="PROSITE" id="PS00097">
    <property type="entry name" value="CARBAMOYLTRANSFERASE"/>
    <property type="match status" value="1"/>
</dbReference>
<keyword id="KW-0665">Pyrimidine biosynthesis</keyword>
<keyword id="KW-1185">Reference proteome</keyword>
<keyword id="KW-0808">Transferase</keyword>
<organism>
    <name type="scientific">Desulforamulus reducens (strain ATCC BAA-1160 / DSM 100696 / MI-1)</name>
    <name type="common">Desulfotomaculum reducens</name>
    <dbReference type="NCBI Taxonomy" id="349161"/>
    <lineage>
        <taxon>Bacteria</taxon>
        <taxon>Bacillati</taxon>
        <taxon>Bacillota</taxon>
        <taxon>Clostridia</taxon>
        <taxon>Eubacteriales</taxon>
        <taxon>Peptococcaceae</taxon>
        <taxon>Desulforamulus</taxon>
    </lineage>
</organism>
<accession>A4J555</accession>
<sequence length="312" mass="34372">MFWQRKDLLGLRYLTPEEINLILDTAVPMKEIIGRKIKKTPTLRGRSMVTLFYENSTRTRSSFDLAGKFLSADTVGLTASSSSVAKGESLRDTGLTLTAMGVDVVVMRHPASGAAEYLAKCIPAAVINAGDGTHEHPTQALLDMFTIREKKGSMAGLKVVIVGDILHSRVARSNIWGLTKMGAEVRVVGPITLMPKDIEKMGVKVYHRLEDALEGADVVNVLRIQLERQQQGLFPSLREYSRLYGINQKRLELTASDAIILHPGPMNRGVEIEHQVAYGNRSFINEQVTNGVAVRMALLYLLTGGEYHALSN</sequence>
<feature type="chain" id="PRO_1000070898" description="Aspartate carbamoyltransferase catalytic subunit">
    <location>
        <begin position="1"/>
        <end position="312"/>
    </location>
</feature>
<feature type="binding site" evidence="1">
    <location>
        <position position="58"/>
    </location>
    <ligand>
        <name>carbamoyl phosphate</name>
        <dbReference type="ChEBI" id="CHEBI:58228"/>
    </ligand>
</feature>
<feature type="binding site" evidence="1">
    <location>
        <position position="59"/>
    </location>
    <ligand>
        <name>carbamoyl phosphate</name>
        <dbReference type="ChEBI" id="CHEBI:58228"/>
    </ligand>
</feature>
<feature type="binding site" evidence="1">
    <location>
        <position position="86"/>
    </location>
    <ligand>
        <name>L-aspartate</name>
        <dbReference type="ChEBI" id="CHEBI:29991"/>
    </ligand>
</feature>
<feature type="binding site" evidence="1">
    <location>
        <position position="108"/>
    </location>
    <ligand>
        <name>carbamoyl phosphate</name>
        <dbReference type="ChEBI" id="CHEBI:58228"/>
    </ligand>
</feature>
<feature type="binding site" evidence="1">
    <location>
        <position position="136"/>
    </location>
    <ligand>
        <name>carbamoyl phosphate</name>
        <dbReference type="ChEBI" id="CHEBI:58228"/>
    </ligand>
</feature>
<feature type="binding site" evidence="1">
    <location>
        <position position="139"/>
    </location>
    <ligand>
        <name>carbamoyl phosphate</name>
        <dbReference type="ChEBI" id="CHEBI:58228"/>
    </ligand>
</feature>
<feature type="binding site" evidence="1">
    <location>
        <position position="169"/>
    </location>
    <ligand>
        <name>L-aspartate</name>
        <dbReference type="ChEBI" id="CHEBI:29991"/>
    </ligand>
</feature>
<feature type="binding site" evidence="1">
    <location>
        <position position="223"/>
    </location>
    <ligand>
        <name>L-aspartate</name>
        <dbReference type="ChEBI" id="CHEBI:29991"/>
    </ligand>
</feature>
<feature type="binding site" evidence="1">
    <location>
        <position position="264"/>
    </location>
    <ligand>
        <name>carbamoyl phosphate</name>
        <dbReference type="ChEBI" id="CHEBI:58228"/>
    </ligand>
</feature>
<feature type="binding site" evidence="1">
    <location>
        <position position="265"/>
    </location>
    <ligand>
        <name>carbamoyl phosphate</name>
        <dbReference type="ChEBI" id="CHEBI:58228"/>
    </ligand>
</feature>
<evidence type="ECO:0000255" key="1">
    <source>
        <dbReference type="HAMAP-Rule" id="MF_00001"/>
    </source>
</evidence>
<protein>
    <recommendedName>
        <fullName evidence="1">Aspartate carbamoyltransferase catalytic subunit</fullName>
        <ecNumber evidence="1">2.1.3.2</ecNumber>
    </recommendedName>
    <alternativeName>
        <fullName evidence="1">Aspartate transcarbamylase</fullName>
        <shortName evidence="1">ATCase</shortName>
    </alternativeName>
</protein>